<name>GPC_BPPM2</name>
<protein>
    <recommendedName>
        <fullName>Uncharacterized protein Gp-c</fullName>
    </recommendedName>
</protein>
<keyword id="KW-1185">Reference proteome</keyword>
<organism>
    <name type="scientific">Pseudoalteromonas phage PM2</name>
    <name type="common">Bacteriophage PM2</name>
    <dbReference type="NCBI Taxonomy" id="2905728"/>
    <lineage>
        <taxon>Viruses</taxon>
        <taxon>Varidnaviria</taxon>
        <taxon>Bamfordvirae</taxon>
        <taxon>Preplasmiviricota</taxon>
        <taxon>Tectiliviricetes</taxon>
        <taxon>Vinavirales</taxon>
        <taxon>Corticoviridae</taxon>
        <taxon>Corticovirus</taxon>
        <taxon>Corticovirus PM2</taxon>
    </lineage>
</organism>
<organismHost>
    <name type="scientific">Pseudoalteromonas espejiana</name>
    <dbReference type="NCBI Taxonomy" id="28107"/>
</organismHost>
<sequence>MKITTSIELLDWFKSVVDIDSDYMVSKLTGIPKQTLSTVRTGNSEFSDYTALKLLLVGEHPEPLKGMALLEAHKAERNGNEEQAKLWRKSVA</sequence>
<reference key="1">
    <citation type="journal article" date="1999" name="Virology">
        <title>The complete genome sequence of PM2, the first lipid-containing bacterial virus to be isolated.</title>
        <authorList>
            <person name="Maennistoe R.H."/>
            <person name="Kivelae H.M."/>
            <person name="Paulin L."/>
            <person name="Bamford D.H."/>
            <person name="Bamford J.K."/>
        </authorList>
    </citation>
    <scope>NUCLEOTIDE SEQUENCE [GENOMIC DNA]</scope>
</reference>
<proteinExistence type="predicted"/>
<accession>Q9XJS6</accession>
<gene>
    <name type="ORF">c</name>
</gene>
<feature type="chain" id="PRO_0000339912" description="Uncharacterized protein Gp-c">
    <location>
        <begin position="1"/>
        <end position="92"/>
    </location>
</feature>
<dbReference type="EMBL" id="AF155037">
    <property type="protein sequence ID" value="AAD43540.1"/>
    <property type="molecule type" value="Genomic_DNA"/>
</dbReference>
<dbReference type="RefSeq" id="NP_049893.1">
    <property type="nucleotide sequence ID" value="NC_000867.1"/>
</dbReference>
<dbReference type="SMR" id="Q9XJS6"/>
<dbReference type="KEGG" id="vg:1262034"/>
<dbReference type="Proteomes" id="UP000002136">
    <property type="component" value="Genome"/>
</dbReference>